<dbReference type="EC" id="4.2.1.11" evidence="1"/>
<dbReference type="EMBL" id="CP001056">
    <property type="protein sequence ID" value="ACD22665.1"/>
    <property type="molecule type" value="Genomic_DNA"/>
</dbReference>
<dbReference type="SMR" id="B2TPW4"/>
<dbReference type="KEGG" id="cbk:CLL_A3055"/>
<dbReference type="PATRIC" id="fig|935198.13.peg.3019"/>
<dbReference type="HOGENOM" id="CLU_031223_2_1_9"/>
<dbReference type="UniPathway" id="UPA00109">
    <property type="reaction ID" value="UER00187"/>
</dbReference>
<dbReference type="Proteomes" id="UP000001195">
    <property type="component" value="Chromosome"/>
</dbReference>
<dbReference type="GO" id="GO:0009986">
    <property type="term" value="C:cell surface"/>
    <property type="evidence" value="ECO:0007669"/>
    <property type="project" value="UniProtKB-SubCell"/>
</dbReference>
<dbReference type="GO" id="GO:0005576">
    <property type="term" value="C:extracellular region"/>
    <property type="evidence" value="ECO:0007669"/>
    <property type="project" value="UniProtKB-SubCell"/>
</dbReference>
<dbReference type="GO" id="GO:0000015">
    <property type="term" value="C:phosphopyruvate hydratase complex"/>
    <property type="evidence" value="ECO:0007669"/>
    <property type="project" value="InterPro"/>
</dbReference>
<dbReference type="GO" id="GO:0000287">
    <property type="term" value="F:magnesium ion binding"/>
    <property type="evidence" value="ECO:0007669"/>
    <property type="project" value="UniProtKB-UniRule"/>
</dbReference>
<dbReference type="GO" id="GO:0004634">
    <property type="term" value="F:phosphopyruvate hydratase activity"/>
    <property type="evidence" value="ECO:0007669"/>
    <property type="project" value="UniProtKB-UniRule"/>
</dbReference>
<dbReference type="GO" id="GO:0006096">
    <property type="term" value="P:glycolytic process"/>
    <property type="evidence" value="ECO:0007669"/>
    <property type="project" value="UniProtKB-UniRule"/>
</dbReference>
<dbReference type="CDD" id="cd03313">
    <property type="entry name" value="enolase"/>
    <property type="match status" value="1"/>
</dbReference>
<dbReference type="FunFam" id="3.20.20.120:FF:000001">
    <property type="entry name" value="Enolase"/>
    <property type="match status" value="1"/>
</dbReference>
<dbReference type="FunFam" id="3.30.390.10:FF:000001">
    <property type="entry name" value="Enolase"/>
    <property type="match status" value="1"/>
</dbReference>
<dbReference type="Gene3D" id="3.20.20.120">
    <property type="entry name" value="Enolase-like C-terminal domain"/>
    <property type="match status" value="1"/>
</dbReference>
<dbReference type="Gene3D" id="3.30.390.10">
    <property type="entry name" value="Enolase-like, N-terminal domain"/>
    <property type="match status" value="1"/>
</dbReference>
<dbReference type="HAMAP" id="MF_00318">
    <property type="entry name" value="Enolase"/>
    <property type="match status" value="1"/>
</dbReference>
<dbReference type="InterPro" id="IPR000941">
    <property type="entry name" value="Enolase"/>
</dbReference>
<dbReference type="InterPro" id="IPR036849">
    <property type="entry name" value="Enolase-like_C_sf"/>
</dbReference>
<dbReference type="InterPro" id="IPR029017">
    <property type="entry name" value="Enolase-like_N"/>
</dbReference>
<dbReference type="InterPro" id="IPR020810">
    <property type="entry name" value="Enolase_C"/>
</dbReference>
<dbReference type="InterPro" id="IPR020809">
    <property type="entry name" value="Enolase_CS"/>
</dbReference>
<dbReference type="InterPro" id="IPR020811">
    <property type="entry name" value="Enolase_N"/>
</dbReference>
<dbReference type="NCBIfam" id="TIGR01060">
    <property type="entry name" value="eno"/>
    <property type="match status" value="1"/>
</dbReference>
<dbReference type="PANTHER" id="PTHR11902">
    <property type="entry name" value="ENOLASE"/>
    <property type="match status" value="1"/>
</dbReference>
<dbReference type="PANTHER" id="PTHR11902:SF1">
    <property type="entry name" value="ENOLASE"/>
    <property type="match status" value="1"/>
</dbReference>
<dbReference type="Pfam" id="PF00113">
    <property type="entry name" value="Enolase_C"/>
    <property type="match status" value="1"/>
</dbReference>
<dbReference type="Pfam" id="PF03952">
    <property type="entry name" value="Enolase_N"/>
    <property type="match status" value="1"/>
</dbReference>
<dbReference type="PIRSF" id="PIRSF001400">
    <property type="entry name" value="Enolase"/>
    <property type="match status" value="1"/>
</dbReference>
<dbReference type="PRINTS" id="PR00148">
    <property type="entry name" value="ENOLASE"/>
</dbReference>
<dbReference type="SFLD" id="SFLDF00002">
    <property type="entry name" value="enolase"/>
    <property type="match status" value="1"/>
</dbReference>
<dbReference type="SFLD" id="SFLDG00178">
    <property type="entry name" value="enolase"/>
    <property type="match status" value="1"/>
</dbReference>
<dbReference type="SMART" id="SM01192">
    <property type="entry name" value="Enolase_C"/>
    <property type="match status" value="1"/>
</dbReference>
<dbReference type="SMART" id="SM01193">
    <property type="entry name" value="Enolase_N"/>
    <property type="match status" value="1"/>
</dbReference>
<dbReference type="SUPFAM" id="SSF51604">
    <property type="entry name" value="Enolase C-terminal domain-like"/>
    <property type="match status" value="1"/>
</dbReference>
<dbReference type="SUPFAM" id="SSF54826">
    <property type="entry name" value="Enolase N-terminal domain-like"/>
    <property type="match status" value="1"/>
</dbReference>
<dbReference type="PROSITE" id="PS00164">
    <property type="entry name" value="ENOLASE"/>
    <property type="match status" value="1"/>
</dbReference>
<gene>
    <name evidence="1" type="primary">eno</name>
    <name type="ordered locus">CLL_A3055</name>
</gene>
<feature type="chain" id="PRO_1000115850" description="Enolase">
    <location>
        <begin position="1"/>
        <end position="431"/>
    </location>
</feature>
<feature type="active site" description="Proton donor" evidence="1">
    <location>
        <position position="208"/>
    </location>
</feature>
<feature type="active site" description="Proton acceptor" evidence="1">
    <location>
        <position position="340"/>
    </location>
</feature>
<feature type="binding site" evidence="1">
    <location>
        <position position="166"/>
    </location>
    <ligand>
        <name>(2R)-2-phosphoglycerate</name>
        <dbReference type="ChEBI" id="CHEBI:58289"/>
    </ligand>
</feature>
<feature type="binding site" evidence="1">
    <location>
        <position position="245"/>
    </location>
    <ligand>
        <name>Mg(2+)</name>
        <dbReference type="ChEBI" id="CHEBI:18420"/>
    </ligand>
</feature>
<feature type="binding site" evidence="1">
    <location>
        <position position="288"/>
    </location>
    <ligand>
        <name>Mg(2+)</name>
        <dbReference type="ChEBI" id="CHEBI:18420"/>
    </ligand>
</feature>
<feature type="binding site" evidence="1">
    <location>
        <position position="315"/>
    </location>
    <ligand>
        <name>Mg(2+)</name>
        <dbReference type="ChEBI" id="CHEBI:18420"/>
    </ligand>
</feature>
<feature type="binding site" evidence="1">
    <location>
        <position position="340"/>
    </location>
    <ligand>
        <name>(2R)-2-phosphoglycerate</name>
        <dbReference type="ChEBI" id="CHEBI:58289"/>
    </ligand>
</feature>
<feature type="binding site" evidence="1">
    <location>
        <position position="369"/>
    </location>
    <ligand>
        <name>(2R)-2-phosphoglycerate</name>
        <dbReference type="ChEBI" id="CHEBI:58289"/>
    </ligand>
</feature>
<feature type="binding site" evidence="1">
    <location>
        <position position="370"/>
    </location>
    <ligand>
        <name>(2R)-2-phosphoglycerate</name>
        <dbReference type="ChEBI" id="CHEBI:58289"/>
    </ligand>
</feature>
<feature type="binding site" evidence="1">
    <location>
        <position position="391"/>
    </location>
    <ligand>
        <name>(2R)-2-phosphoglycerate</name>
        <dbReference type="ChEBI" id="CHEBI:58289"/>
    </ligand>
</feature>
<proteinExistence type="inferred from homology"/>
<keyword id="KW-0963">Cytoplasm</keyword>
<keyword id="KW-0324">Glycolysis</keyword>
<keyword id="KW-0456">Lyase</keyword>
<keyword id="KW-0460">Magnesium</keyword>
<keyword id="KW-0479">Metal-binding</keyword>
<keyword id="KW-0964">Secreted</keyword>
<name>ENO_CLOBB</name>
<comment type="function">
    <text evidence="1">Catalyzes the reversible conversion of 2-phosphoglycerate (2-PG) into phosphoenolpyruvate (PEP). It is essential for the degradation of carbohydrates via glycolysis.</text>
</comment>
<comment type="catalytic activity">
    <reaction evidence="1">
        <text>(2R)-2-phosphoglycerate = phosphoenolpyruvate + H2O</text>
        <dbReference type="Rhea" id="RHEA:10164"/>
        <dbReference type="ChEBI" id="CHEBI:15377"/>
        <dbReference type="ChEBI" id="CHEBI:58289"/>
        <dbReference type="ChEBI" id="CHEBI:58702"/>
        <dbReference type="EC" id="4.2.1.11"/>
    </reaction>
</comment>
<comment type="cofactor">
    <cofactor evidence="1">
        <name>Mg(2+)</name>
        <dbReference type="ChEBI" id="CHEBI:18420"/>
    </cofactor>
    <text evidence="1">Binds a second Mg(2+) ion via substrate during catalysis.</text>
</comment>
<comment type="pathway">
    <text evidence="1">Carbohydrate degradation; glycolysis; pyruvate from D-glyceraldehyde 3-phosphate: step 4/5.</text>
</comment>
<comment type="subcellular location">
    <subcellularLocation>
        <location evidence="1">Cytoplasm</location>
    </subcellularLocation>
    <subcellularLocation>
        <location evidence="1">Secreted</location>
    </subcellularLocation>
    <subcellularLocation>
        <location evidence="1">Cell surface</location>
    </subcellularLocation>
    <text evidence="1">Fractions of enolase are present in both the cytoplasm and on the cell surface.</text>
</comment>
<comment type="similarity">
    <text evidence="1">Belongs to the enolase family.</text>
</comment>
<accession>B2TPW4</accession>
<protein>
    <recommendedName>
        <fullName evidence="1">Enolase</fullName>
        <ecNumber evidence="1">4.2.1.11</ecNumber>
    </recommendedName>
    <alternativeName>
        <fullName evidence="1">2-phospho-D-glycerate hydro-lyase</fullName>
    </alternativeName>
    <alternativeName>
        <fullName evidence="1">2-phosphoglycerate dehydratase</fullName>
    </alternativeName>
</protein>
<organism>
    <name type="scientific">Clostridium botulinum (strain Eklund 17B / Type B)</name>
    <dbReference type="NCBI Taxonomy" id="935198"/>
    <lineage>
        <taxon>Bacteria</taxon>
        <taxon>Bacillati</taxon>
        <taxon>Bacillota</taxon>
        <taxon>Clostridia</taxon>
        <taxon>Eubacteriales</taxon>
        <taxon>Clostridiaceae</taxon>
        <taxon>Clostridium</taxon>
    </lineage>
</organism>
<evidence type="ECO:0000255" key="1">
    <source>
        <dbReference type="HAMAP-Rule" id="MF_00318"/>
    </source>
</evidence>
<sequence>MNDYLEIIDVVARQILDSRCFPTVEVEVYLEDGTIGRAAVPSGASTGMYEAVELRDGDKDKYLGKGVLTAVQNVNDTIAEALIGCNVFDQPYIDKMLIELDGTDNKGKLGANAILGVSLAVANAAANALGLSLYKYVGGVNAKVLPVPMMNIINGGSHADNSVDLQEFMIMPVGATSFTEALRMCAEVYHTLKNTLKDKGYATGLGDEGGFAPNLKSNAEAIDVIIEAITKAGYKAGEDMFIAIDAASSEYYKDGKYVLENEGKTLTSAEMVDFFEDWVNKYPIISIEDGMAEEDWDGWKLLNERLGKKVQLVGDDLFVTNTERLEKGIEIGAANSILIKLNQIGTLTETLNAIEMANRAGYTAVISHRSGETEDTTISDLVVAVNAGQIKTGAPARSERVAKYNQLLRIEEELEDVAEYRGKKAFFNIKK</sequence>
<reference key="1">
    <citation type="submission" date="2008-04" db="EMBL/GenBank/DDBJ databases">
        <title>Complete sequence of Clostridium botulinum strain Eklund.</title>
        <authorList>
            <person name="Brinkac L.M."/>
            <person name="Brown J.L."/>
            <person name="Bruce D."/>
            <person name="Detter C."/>
            <person name="Munk C."/>
            <person name="Smith L.A."/>
            <person name="Smith T.J."/>
            <person name="Sutton G."/>
            <person name="Brettin T.S."/>
        </authorList>
    </citation>
    <scope>NUCLEOTIDE SEQUENCE [LARGE SCALE GENOMIC DNA]</scope>
    <source>
        <strain>Eklund 17B / Type B</strain>
    </source>
</reference>